<organism>
    <name type="scientific">Dictyostelium discoideum</name>
    <name type="common">Social amoeba</name>
    <dbReference type="NCBI Taxonomy" id="44689"/>
    <lineage>
        <taxon>Eukaryota</taxon>
        <taxon>Amoebozoa</taxon>
        <taxon>Evosea</taxon>
        <taxon>Eumycetozoa</taxon>
        <taxon>Dictyostelia</taxon>
        <taxon>Dictyosteliales</taxon>
        <taxon>Dictyosteliaceae</taxon>
        <taxon>Dictyostelium</taxon>
    </lineage>
</organism>
<accession>Q1ZXG8</accession>
<accession>O15745</accession>
<evidence type="ECO:0000255" key="1">
    <source>
        <dbReference type="PROSITE-ProRule" id="PRU00160"/>
    </source>
</evidence>
<evidence type="ECO:0000305" key="2"/>
<name>D1060_DICDI</name>
<reference key="1">
    <citation type="journal article" date="2005" name="Nature">
        <title>The genome of the social amoeba Dictyostelium discoideum.</title>
        <authorList>
            <person name="Eichinger L."/>
            <person name="Pachebat J.A."/>
            <person name="Gloeckner G."/>
            <person name="Rajandream M.A."/>
            <person name="Sucgang R."/>
            <person name="Berriman M."/>
            <person name="Song J."/>
            <person name="Olsen R."/>
            <person name="Szafranski K."/>
            <person name="Xu Q."/>
            <person name="Tunggal B."/>
            <person name="Kummerfeld S."/>
            <person name="Madera M."/>
            <person name="Konfortov B.A."/>
            <person name="Rivero F."/>
            <person name="Bankier A.T."/>
            <person name="Lehmann R."/>
            <person name="Hamlin N."/>
            <person name="Davies R."/>
            <person name="Gaudet P."/>
            <person name="Fey P."/>
            <person name="Pilcher K."/>
            <person name="Chen G."/>
            <person name="Saunders D."/>
            <person name="Sodergren E.J."/>
            <person name="Davis P."/>
            <person name="Kerhornou A."/>
            <person name="Nie X."/>
            <person name="Hall N."/>
            <person name="Anjard C."/>
            <person name="Hemphill L."/>
            <person name="Bason N."/>
            <person name="Farbrother P."/>
            <person name="Desany B."/>
            <person name="Just E."/>
            <person name="Morio T."/>
            <person name="Rost R."/>
            <person name="Churcher C.M."/>
            <person name="Cooper J."/>
            <person name="Haydock S."/>
            <person name="van Driessche N."/>
            <person name="Cronin A."/>
            <person name="Goodhead I."/>
            <person name="Muzny D.M."/>
            <person name="Mourier T."/>
            <person name="Pain A."/>
            <person name="Lu M."/>
            <person name="Harper D."/>
            <person name="Lindsay R."/>
            <person name="Hauser H."/>
            <person name="James K.D."/>
            <person name="Quiles M."/>
            <person name="Madan Babu M."/>
            <person name="Saito T."/>
            <person name="Buchrieser C."/>
            <person name="Wardroper A."/>
            <person name="Felder M."/>
            <person name="Thangavelu M."/>
            <person name="Johnson D."/>
            <person name="Knights A."/>
            <person name="Loulseged H."/>
            <person name="Mungall K.L."/>
            <person name="Oliver K."/>
            <person name="Price C."/>
            <person name="Quail M.A."/>
            <person name="Urushihara H."/>
            <person name="Hernandez J."/>
            <person name="Rabbinowitsch E."/>
            <person name="Steffen D."/>
            <person name="Sanders M."/>
            <person name="Ma J."/>
            <person name="Kohara Y."/>
            <person name="Sharp S."/>
            <person name="Simmonds M.N."/>
            <person name="Spiegler S."/>
            <person name="Tivey A."/>
            <person name="Sugano S."/>
            <person name="White B."/>
            <person name="Walker D."/>
            <person name="Woodward J.R."/>
            <person name="Winckler T."/>
            <person name="Tanaka Y."/>
            <person name="Shaulsky G."/>
            <person name="Schleicher M."/>
            <person name="Weinstock G.M."/>
            <person name="Rosenthal A."/>
            <person name="Cox E.C."/>
            <person name="Chisholm R.L."/>
            <person name="Gibbs R.A."/>
            <person name="Loomis W.F."/>
            <person name="Platzer M."/>
            <person name="Kay R.R."/>
            <person name="Williams J.G."/>
            <person name="Dear P.H."/>
            <person name="Noegel A.A."/>
            <person name="Barrell B.G."/>
            <person name="Kuspa A."/>
        </authorList>
    </citation>
    <scope>NUCLEOTIDE SEQUENCE [LARGE SCALE GENOMIC DNA]</scope>
    <source>
        <strain>AX4</strain>
    </source>
</reference>
<reference key="2">
    <citation type="submission" date="1997-08" db="EMBL/GenBank/DDBJ databases">
        <authorList>
            <person name="Loomis W.F."/>
            <person name="Iranfar N."/>
        </authorList>
    </citation>
    <scope>NUCLEOTIDE SEQUENCE [GENOMIC DNA] OF 1-46</scope>
    <source>
        <strain>AX4</strain>
    </source>
</reference>
<dbReference type="EC" id="3.1.3.48"/>
<dbReference type="EMBL" id="AAFI02000044">
    <property type="protein sequence ID" value="EAS66873.1"/>
    <property type="molecule type" value="Genomic_DNA"/>
</dbReference>
<dbReference type="EMBL" id="AF020278">
    <property type="protein sequence ID" value="AAB70846.1"/>
    <property type="molecule type" value="Genomic_DNA"/>
</dbReference>
<dbReference type="RefSeq" id="XP_001134556.1">
    <property type="nucleotide sequence ID" value="XM_001134556.1"/>
</dbReference>
<dbReference type="SMR" id="Q1ZXG8"/>
<dbReference type="STRING" id="44689.Q1ZXG8"/>
<dbReference type="PaxDb" id="44689-DDB0232939"/>
<dbReference type="EnsemblProtists" id="EAS66873">
    <property type="protein sequence ID" value="EAS66873"/>
    <property type="gene ID" value="DDB_G0281953"/>
</dbReference>
<dbReference type="GeneID" id="8623336"/>
<dbReference type="KEGG" id="ddi:DDB_G0281953"/>
<dbReference type="dictyBase" id="DDB_G0281953"/>
<dbReference type="VEuPathDB" id="AmoebaDB:DDB_G0281953"/>
<dbReference type="eggNOG" id="KOG1572">
    <property type="taxonomic scope" value="Eukaryota"/>
</dbReference>
<dbReference type="HOGENOM" id="CLU_047845_5_1_1"/>
<dbReference type="InParanoid" id="Q1ZXG8"/>
<dbReference type="OMA" id="PWNPISE"/>
<dbReference type="PhylomeDB" id="Q1ZXG8"/>
<dbReference type="PRO" id="PR:Q1ZXG8"/>
<dbReference type="Proteomes" id="UP000002195">
    <property type="component" value="Chromosome 3"/>
</dbReference>
<dbReference type="GO" id="GO:0005737">
    <property type="term" value="C:cytoplasm"/>
    <property type="evidence" value="ECO:0007669"/>
    <property type="project" value="UniProtKB-SubCell"/>
</dbReference>
<dbReference type="GO" id="GO:0016791">
    <property type="term" value="F:phosphatase activity"/>
    <property type="evidence" value="ECO:0000318"/>
    <property type="project" value="GO_Central"/>
</dbReference>
<dbReference type="GO" id="GO:0004725">
    <property type="term" value="F:protein tyrosine phosphatase activity"/>
    <property type="evidence" value="ECO:0007669"/>
    <property type="project" value="UniProtKB-EC"/>
</dbReference>
<dbReference type="CDD" id="cd14531">
    <property type="entry name" value="PFA-DSP_Oca1"/>
    <property type="match status" value="1"/>
</dbReference>
<dbReference type="FunFam" id="3.90.190.10:FF:000035">
    <property type="entry name" value="Tyrosine phosphatase, putative"/>
    <property type="match status" value="1"/>
</dbReference>
<dbReference type="Gene3D" id="3.90.190.10">
    <property type="entry name" value="Protein tyrosine phosphatase superfamily"/>
    <property type="match status" value="1"/>
</dbReference>
<dbReference type="InterPro" id="IPR020428">
    <property type="entry name" value="PFA-DSPs"/>
</dbReference>
<dbReference type="InterPro" id="IPR029021">
    <property type="entry name" value="Prot-tyrosine_phosphatase-like"/>
</dbReference>
<dbReference type="InterPro" id="IPR004861">
    <property type="entry name" value="Siw14-like"/>
</dbReference>
<dbReference type="InterPro" id="IPR020422">
    <property type="entry name" value="TYR_PHOSPHATASE_DUAL_dom"/>
</dbReference>
<dbReference type="PANTHER" id="PTHR31126">
    <property type="entry name" value="TYROSINE-PROTEIN PHOSPHATASE"/>
    <property type="match status" value="1"/>
</dbReference>
<dbReference type="PANTHER" id="PTHR31126:SF8">
    <property type="entry name" value="TYROSINE-PROTEIN PHOSPHATASE OCA1-RELATED"/>
    <property type="match status" value="1"/>
</dbReference>
<dbReference type="Pfam" id="PF03162">
    <property type="entry name" value="Y_phosphatase2"/>
    <property type="match status" value="1"/>
</dbReference>
<dbReference type="PRINTS" id="PR01911">
    <property type="entry name" value="PFDSPHPHTASE"/>
</dbReference>
<dbReference type="SUPFAM" id="SSF52799">
    <property type="entry name" value="(Phosphotyrosine protein) phosphatases II"/>
    <property type="match status" value="1"/>
</dbReference>
<dbReference type="PROSITE" id="PS50054">
    <property type="entry name" value="TYR_PHOSPHATASE_DUAL"/>
    <property type="match status" value="1"/>
</dbReference>
<proteinExistence type="inferred from homology"/>
<gene>
    <name type="primary">DG1060</name>
    <name type="ORF">DDB_G0281953</name>
</gene>
<sequence>MAHHIPPLNFGMVADDLYRSGQPNELNFPFLEKLQLKKIIFLAPDDPSQQFQNFVEDQDIELIHLGMDTHQNPWNPISEEIVISALKIILNPDNYPLHIMCNLGRHRTGTVVGCLRKLQRWNLTSIFEEYRRFAGSKVKLLNEQFIELFDTDLVTYNNAPQWLYLS</sequence>
<feature type="chain" id="PRO_0000368208" description="Probable tyrosine-protein phosphatase DG1060">
    <location>
        <begin position="1"/>
        <end position="166"/>
    </location>
</feature>
<feature type="domain" description="Tyrosine-protein phosphatase" evidence="1">
    <location>
        <begin position="9"/>
        <end position="162"/>
    </location>
</feature>
<feature type="active site" description="Phosphocysteine intermediate" evidence="1">
    <location>
        <position position="101"/>
    </location>
</feature>
<keyword id="KW-0963">Cytoplasm</keyword>
<keyword id="KW-0378">Hydrolase</keyword>
<keyword id="KW-0904">Protein phosphatase</keyword>
<keyword id="KW-1185">Reference proteome</keyword>
<comment type="catalytic activity">
    <reaction>
        <text>O-phospho-L-tyrosyl-[protein] + H2O = L-tyrosyl-[protein] + phosphate</text>
        <dbReference type="Rhea" id="RHEA:10684"/>
        <dbReference type="Rhea" id="RHEA-COMP:10136"/>
        <dbReference type="Rhea" id="RHEA-COMP:20101"/>
        <dbReference type="ChEBI" id="CHEBI:15377"/>
        <dbReference type="ChEBI" id="CHEBI:43474"/>
        <dbReference type="ChEBI" id="CHEBI:46858"/>
        <dbReference type="ChEBI" id="CHEBI:61978"/>
        <dbReference type="EC" id="3.1.3.48"/>
    </reaction>
</comment>
<comment type="subcellular location">
    <subcellularLocation>
        <location evidence="2">Cytoplasm</location>
    </subcellularLocation>
</comment>
<comment type="similarity">
    <text evidence="2">Belongs to the protein-tyrosine phosphatase family.</text>
</comment>
<protein>
    <recommendedName>
        <fullName>Probable tyrosine-protein phosphatase DG1060</fullName>
        <ecNumber>3.1.3.48</ecNumber>
    </recommendedName>
    <alternativeName>
        <fullName>Developmental gene 1060 protein</fullName>
    </alternativeName>
</protein>